<protein>
    <recommendedName>
        <fullName>Uncharacterized protein MJ1241</fullName>
    </recommendedName>
</protein>
<proteinExistence type="predicted"/>
<keyword id="KW-1185">Reference proteome</keyword>
<reference key="1">
    <citation type="journal article" date="1996" name="Science">
        <title>Complete genome sequence of the methanogenic archaeon, Methanococcus jannaschii.</title>
        <authorList>
            <person name="Bult C.J."/>
            <person name="White O."/>
            <person name="Olsen G.J."/>
            <person name="Zhou L."/>
            <person name="Fleischmann R.D."/>
            <person name="Sutton G.G."/>
            <person name="Blake J.A."/>
            <person name="FitzGerald L.M."/>
            <person name="Clayton R.A."/>
            <person name="Gocayne J.D."/>
            <person name="Kerlavage A.R."/>
            <person name="Dougherty B.A."/>
            <person name="Tomb J.-F."/>
            <person name="Adams M.D."/>
            <person name="Reich C.I."/>
            <person name="Overbeek R."/>
            <person name="Kirkness E.F."/>
            <person name="Weinstock K.G."/>
            <person name="Merrick J.M."/>
            <person name="Glodek A."/>
            <person name="Scott J.L."/>
            <person name="Geoghagen N.S.M."/>
            <person name="Weidman J.F."/>
            <person name="Fuhrmann J.L."/>
            <person name="Nguyen D."/>
            <person name="Utterback T.R."/>
            <person name="Kelley J.M."/>
            <person name="Peterson J.D."/>
            <person name="Sadow P.W."/>
            <person name="Hanna M.C."/>
            <person name="Cotton M.D."/>
            <person name="Roberts K.M."/>
            <person name="Hurst M.A."/>
            <person name="Kaine B.P."/>
            <person name="Borodovsky M."/>
            <person name="Klenk H.-P."/>
            <person name="Fraser C.M."/>
            <person name="Smith H.O."/>
            <person name="Woese C.R."/>
            <person name="Venter J.C."/>
        </authorList>
    </citation>
    <scope>NUCLEOTIDE SEQUENCE [LARGE SCALE GENOMIC DNA]</scope>
    <source>
        <strain>ATCC 43067 / DSM 2661 / JAL-1 / JCM 10045 / NBRC 100440</strain>
    </source>
</reference>
<gene>
    <name type="ordered locus">MJ1241</name>
</gene>
<sequence>MVLKMEIKWYVKRGFEDNLIDALNTYGSACVLGLAGMGKTTIARYIYTKLRREGVKVVYLTSDEESKTIKF</sequence>
<feature type="chain" id="PRO_0000107234" description="Uncharacterized protein MJ1241">
    <location>
        <begin position="1"/>
        <end position="71"/>
    </location>
</feature>
<name>Y1241_METJA</name>
<dbReference type="EMBL" id="L77117">
    <property type="protein sequence ID" value="AAB99246.1"/>
    <property type="molecule type" value="Genomic_DNA"/>
</dbReference>
<dbReference type="PIR" id="H64454">
    <property type="entry name" value="H64454"/>
</dbReference>
<dbReference type="STRING" id="243232.MJ_1241"/>
<dbReference type="PaxDb" id="243232-MJ_1241"/>
<dbReference type="EnsemblBacteria" id="AAB99246">
    <property type="protein sequence ID" value="AAB99246"/>
    <property type="gene ID" value="MJ_1241"/>
</dbReference>
<dbReference type="KEGG" id="mja:MJ_1241"/>
<dbReference type="eggNOG" id="arCOG01040">
    <property type="taxonomic scope" value="Archaea"/>
</dbReference>
<dbReference type="HOGENOM" id="CLU_2730398_0_0_2"/>
<dbReference type="InParanoid" id="Q58638"/>
<dbReference type="Proteomes" id="UP000000805">
    <property type="component" value="Chromosome"/>
</dbReference>
<dbReference type="Gene3D" id="3.40.50.300">
    <property type="entry name" value="P-loop containing nucleotide triphosphate hydrolases"/>
    <property type="match status" value="1"/>
</dbReference>
<dbReference type="InterPro" id="IPR049050">
    <property type="entry name" value="nSTAND3"/>
</dbReference>
<dbReference type="InterPro" id="IPR027417">
    <property type="entry name" value="P-loop_NTPase"/>
</dbReference>
<dbReference type="Pfam" id="PF20720">
    <property type="entry name" value="nSTAND3"/>
    <property type="match status" value="1"/>
</dbReference>
<dbReference type="SUPFAM" id="SSF52540">
    <property type="entry name" value="P-loop containing nucleoside triphosphate hydrolases"/>
    <property type="match status" value="1"/>
</dbReference>
<organism>
    <name type="scientific">Methanocaldococcus jannaschii (strain ATCC 43067 / DSM 2661 / JAL-1 / JCM 10045 / NBRC 100440)</name>
    <name type="common">Methanococcus jannaschii</name>
    <dbReference type="NCBI Taxonomy" id="243232"/>
    <lineage>
        <taxon>Archaea</taxon>
        <taxon>Methanobacteriati</taxon>
        <taxon>Methanobacteriota</taxon>
        <taxon>Methanomada group</taxon>
        <taxon>Methanococci</taxon>
        <taxon>Methanococcales</taxon>
        <taxon>Methanocaldococcaceae</taxon>
        <taxon>Methanocaldococcus</taxon>
    </lineage>
</organism>
<accession>Q58638</accession>